<accession>O17386</accession>
<evidence type="ECO:0000255" key="1"/>
<evidence type="ECO:0000269" key="2">
    <source>
    </source>
</evidence>
<evidence type="ECO:0000269" key="3">
    <source>
    </source>
</evidence>
<evidence type="ECO:0000269" key="4">
    <source>
    </source>
</evidence>
<evidence type="ECO:0000269" key="5">
    <source>
    </source>
</evidence>
<evidence type="ECO:0000269" key="6">
    <source>
    </source>
</evidence>
<evidence type="ECO:0000303" key="7">
    <source>
    </source>
</evidence>
<evidence type="ECO:0000305" key="8"/>
<evidence type="ECO:0000305" key="9">
    <source>
    </source>
</evidence>
<evidence type="ECO:0000312" key="10">
    <source>
        <dbReference type="WormBase" id="F08F1.5"/>
    </source>
</evidence>
<sequence length="458" mass="53273">MFLKKHKSKLLLVPRDEEQEDAGIVAVLTDRIPSVLLVRWFDLFCFGFAMCSYALDFFSDIGIAIFHFWAGRYLSGSLVLAFALLPSVIINIISMVWMLDDEMHWKRRAHPRRTGTFELNQKRFIPLSKMIVLCICQMGPLFWYYKALYYGWMFRKSSNENTDGEKRKCFSKMVEAERDATLLRFFEAFLESAPQLIIQGSIAASYFQNYYQTGTYPYWLYFQAASLLLSIISISWSVVVQNRSLRMIRDDKVNIWPHEAVLQFCWRFLTILARIITLVALVLIFGINVVPLISVHLLVTLVHVIFLQAIHIDACTHIEKLLLLINTFIHIFIPFNMVEGNTRWRYLTAYSVEFIEMMLVCWLLPLSLNTFPYIEKVQVGVPISFIAGIAIMMMYYQFFHPNRRQLIVTQSQEDLSLNVQKSVETLTPKLESSLEISGEQNTSQDLVSELLLDVEHEN</sequence>
<reference evidence="8" key="1">
    <citation type="journal article" date="2000" name="Mol. Cell">
        <title>The ced-8 gene controls the timing of programmed cell deaths in C. elegans.</title>
        <authorList>
            <person name="Stanfield G.M."/>
            <person name="Horvitz H.R."/>
        </authorList>
    </citation>
    <scope>NUCLEOTIDE SEQUENCE [MRNA]</scope>
    <scope>FUNCTION</scope>
    <scope>SUBCELLULAR LOCATION</scope>
</reference>
<reference key="2">
    <citation type="journal article" date="1998" name="Science">
        <title>Genome sequence of the nematode C. elegans: a platform for investigating biology.</title>
        <authorList>
            <consortium name="The C. elegans sequencing consortium"/>
        </authorList>
    </citation>
    <scope>NUCLEOTIDE SEQUENCE [LARGE SCALE GENOMIC DNA]</scope>
    <source>
        <strain>Bristol N2</strain>
    </source>
</reference>
<reference evidence="8" key="3">
    <citation type="journal article" date="1991" name="Genetics">
        <title>Genes required for the engulfment of cell corpses during programmed cell death in Caenorhabditis elegans.</title>
        <authorList>
            <person name="Ellis R.E."/>
            <person name="Jacobson D.M."/>
            <person name="Horvitz H.R."/>
        </authorList>
    </citation>
    <scope>FUNCTION</scope>
    <scope>DISRUPTION PHENOTYPE</scope>
</reference>
<reference evidence="8" key="4">
    <citation type="journal article" date="1999" name="Development">
        <title>Genetic control of programmed cell death in the Caenorhabditis elegans hermaphrodite germline.</title>
        <authorList>
            <person name="Gumienny T.L."/>
            <person name="Lambie E."/>
            <person name="Hartwieg E."/>
            <person name="Horvitz H.R."/>
            <person name="Hengartner M.O."/>
        </authorList>
    </citation>
    <scope>FUNCTION</scope>
</reference>
<reference key="5">
    <citation type="journal article" date="2013" name="Nat. Commun.">
        <title>Caspase-mediated activation of Caenorhabditis elegans CED-8 promotes apoptosis and phosphatidylserine externalization.</title>
        <authorList>
            <person name="Chen Y.Z."/>
            <person name="Mapes J."/>
            <person name="Lee E.S."/>
            <person name="Skeen-Gaar R.R."/>
            <person name="Xue D."/>
        </authorList>
    </citation>
    <scope>FUNCTION</scope>
    <scope>SUBCELLULAR LOCATION</scope>
    <scope>PROTEOLYTIC CLEAVAGE</scope>
    <scope>MUTAGENESIS OF 1-MET--ASP-21; ASP-21 AND ASP-163</scope>
</reference>
<reference key="6">
    <citation type="journal article" date="2013" name="Science">
        <title>Xk-Related protein 8 and CED-8 promote phosphatidylserine exposure in apoptotic cells.</title>
        <authorList>
            <person name="Suzuki J."/>
            <person name="Denning D.P."/>
            <person name="Imanishi E."/>
            <person name="Horvitz H.R."/>
            <person name="Nagata S."/>
        </authorList>
    </citation>
    <scope>FUNCTION</scope>
    <scope>CATALYTIC ACTIVITY</scope>
</reference>
<proteinExistence type="evidence at protein level"/>
<gene>
    <name evidence="7 10" type="primary">ced-8</name>
    <name evidence="10" type="ORF">F08F1.5</name>
</gene>
<organism>
    <name type="scientific">Caenorhabditis elegans</name>
    <dbReference type="NCBI Taxonomy" id="6239"/>
    <lineage>
        <taxon>Eukaryota</taxon>
        <taxon>Metazoa</taxon>
        <taxon>Ecdysozoa</taxon>
        <taxon>Nematoda</taxon>
        <taxon>Chromadorea</taxon>
        <taxon>Rhabditida</taxon>
        <taxon>Rhabditina</taxon>
        <taxon>Rhabditomorpha</taxon>
        <taxon>Rhabditoidea</taxon>
        <taxon>Rhabditidae</taxon>
        <taxon>Peloderinae</taxon>
        <taxon>Caenorhabditis</taxon>
    </lineage>
</organism>
<name>CED8_CAEEL</name>
<dbReference type="EMBL" id="FO081089">
    <property type="protein sequence ID" value="CCD69028.1"/>
    <property type="molecule type" value="Genomic_DNA"/>
</dbReference>
<dbReference type="PIR" id="T32470">
    <property type="entry name" value="T32470"/>
</dbReference>
<dbReference type="RefSeq" id="NP_509427.2">
    <property type="nucleotide sequence ID" value="NM_077026.10"/>
</dbReference>
<dbReference type="SMR" id="O17386"/>
<dbReference type="BioGRID" id="48989">
    <property type="interactions" value="1"/>
</dbReference>
<dbReference type="FunCoup" id="O17386">
    <property type="interactions" value="771"/>
</dbReference>
<dbReference type="STRING" id="6239.F08F1.5.1"/>
<dbReference type="TCDB" id="2.A.112.1.2">
    <property type="family name" value="the kx blood-group antigen (kxa) family"/>
</dbReference>
<dbReference type="PaxDb" id="6239-F08F1.5"/>
<dbReference type="EnsemblMetazoa" id="F08F1.5.1">
    <property type="protein sequence ID" value="F08F1.5.1"/>
    <property type="gene ID" value="WBGene00000422"/>
</dbReference>
<dbReference type="GeneID" id="184190"/>
<dbReference type="KEGG" id="cel:CELE_F08F1.5"/>
<dbReference type="UCSC" id="F08F1.5">
    <property type="organism name" value="c. elegans"/>
</dbReference>
<dbReference type="AGR" id="WB:WBGene00000422"/>
<dbReference type="CTD" id="184190"/>
<dbReference type="WormBase" id="F08F1.5">
    <property type="protein sequence ID" value="CE34294"/>
    <property type="gene ID" value="WBGene00000422"/>
    <property type="gene designation" value="ced-8"/>
</dbReference>
<dbReference type="eggNOG" id="KOG4790">
    <property type="taxonomic scope" value="Eukaryota"/>
</dbReference>
<dbReference type="GeneTree" id="ENSGT00940000170176"/>
<dbReference type="HOGENOM" id="CLU_028534_5_0_1"/>
<dbReference type="InParanoid" id="O17386"/>
<dbReference type="OMA" id="NIWPHEA"/>
<dbReference type="OrthoDB" id="6136301at2759"/>
<dbReference type="PhylomeDB" id="O17386"/>
<dbReference type="PRO" id="PR:O17386"/>
<dbReference type="Proteomes" id="UP000001940">
    <property type="component" value="Chromosome X"/>
</dbReference>
<dbReference type="Bgee" id="WBGene00000422">
    <property type="expression patterns" value="Expressed in germ line (C elegans) and 4 other cell types or tissues"/>
</dbReference>
<dbReference type="GO" id="GO:0005886">
    <property type="term" value="C:plasma membrane"/>
    <property type="evidence" value="ECO:0000314"/>
    <property type="project" value="UniProtKB"/>
</dbReference>
<dbReference type="GO" id="GO:0017128">
    <property type="term" value="F:phospholipid scramblase activity"/>
    <property type="evidence" value="ECO:0000314"/>
    <property type="project" value="UniProtKB"/>
</dbReference>
<dbReference type="GO" id="GO:1902742">
    <property type="term" value="P:apoptotic process involved in development"/>
    <property type="evidence" value="ECO:0000315"/>
    <property type="project" value="UniProtKB"/>
</dbReference>
<dbReference type="GO" id="GO:0009792">
    <property type="term" value="P:embryo development ending in birth or egg hatching"/>
    <property type="evidence" value="ECO:0000315"/>
    <property type="project" value="UniProtKB"/>
</dbReference>
<dbReference type="GO" id="GO:0043652">
    <property type="term" value="P:engulfment of apoptotic cell"/>
    <property type="evidence" value="ECO:0000315"/>
    <property type="project" value="UniProtKB"/>
</dbReference>
<dbReference type="GO" id="GO:0097194">
    <property type="term" value="P:execution phase of apoptosis"/>
    <property type="evidence" value="ECO:0000315"/>
    <property type="project" value="UniProtKB"/>
</dbReference>
<dbReference type="GO" id="GO:0070782">
    <property type="term" value="P:phosphatidylserine exposure on apoptotic cell surface"/>
    <property type="evidence" value="ECO:0000315"/>
    <property type="project" value="UniProtKB"/>
</dbReference>
<dbReference type="GO" id="GO:0012501">
    <property type="term" value="P:programmed cell death"/>
    <property type="evidence" value="ECO:0000315"/>
    <property type="project" value="UniProtKB"/>
</dbReference>
<dbReference type="InterPro" id="IPR018629">
    <property type="entry name" value="XK-rel"/>
</dbReference>
<dbReference type="InterPro" id="IPR050895">
    <property type="entry name" value="XK-related_scramblase"/>
</dbReference>
<dbReference type="PANTHER" id="PTHR16024">
    <property type="entry name" value="XK-RELATED PROTEIN"/>
    <property type="match status" value="1"/>
</dbReference>
<dbReference type="PANTHER" id="PTHR16024:SF6">
    <property type="entry name" value="XK-RELATED PROTEIN"/>
    <property type="match status" value="1"/>
</dbReference>
<dbReference type="Pfam" id="PF09815">
    <property type="entry name" value="XK-related"/>
    <property type="match status" value="1"/>
</dbReference>
<comment type="function">
    <text evidence="2 3 4 5 6">Phospholipid scramblase that acts downstream of ced-9 and caspase ced-3 to promote phosphatidylserine exposure on apoptotic cell surface (PubMed:23845944, PubMed:24225442). Phosphatidylserine is a specific marker only present at the surface of apoptotic cells and acts as a specific signal for engulfment (PubMed:23845944, PubMed:24225442). Regulates apoptosis kinetics during embryonic development (PubMed:10882128, PubMed:1936965, PubMed:23845944, PubMed:24225442). Not required for engulfment of germ cell corpses (PubMed:9927601).</text>
</comment>
<comment type="catalytic activity">
    <reaction evidence="9">
        <text>a 1,2-diacyl-sn-glycero-3-phospho-L-serine(in) = a 1,2-diacyl-sn-glycero-3-phospho-L-serine(out)</text>
        <dbReference type="Rhea" id="RHEA:38663"/>
        <dbReference type="ChEBI" id="CHEBI:57262"/>
    </reaction>
</comment>
<comment type="subcellular location">
    <subcellularLocation>
        <location evidence="2 5">Cell membrane</location>
        <topology evidence="2">Multi-pass membrane protein</topology>
    </subcellularLocation>
</comment>
<comment type="PTM">
    <text evidence="5">Cleavage by ced-3 activates ced-8 function in promoting phosphatidylserine exposure at the surface of apoptotic cells.</text>
</comment>
<comment type="disruption phenotype">
    <text evidence="3">Delayed cell death process.</text>
</comment>
<comment type="similarity">
    <text evidence="8">Belongs to the XK family.</text>
</comment>
<keyword id="KW-0053">Apoptosis</keyword>
<keyword id="KW-1003">Cell membrane</keyword>
<keyword id="KW-0472">Membrane</keyword>
<keyword id="KW-1185">Reference proteome</keyword>
<keyword id="KW-0812">Transmembrane</keyword>
<keyword id="KW-1133">Transmembrane helix</keyword>
<feature type="chain" id="PRO_0000379936" description="Cell death abnormality protein 8">
    <location>
        <begin position="1"/>
        <end position="458"/>
    </location>
</feature>
<feature type="topological domain" description="Cytoplasmic" evidence="8">
    <location>
        <begin position="1"/>
        <end position="45"/>
    </location>
</feature>
<feature type="transmembrane region" description="Helical" evidence="1">
    <location>
        <begin position="46"/>
        <end position="66"/>
    </location>
</feature>
<feature type="topological domain" description="Extracellular" evidence="8">
    <location>
        <begin position="67"/>
        <end position="77"/>
    </location>
</feature>
<feature type="transmembrane region" description="Helical" evidence="1">
    <location>
        <begin position="78"/>
        <end position="98"/>
    </location>
</feature>
<feature type="topological domain" description="Cytoplasmic" evidence="8">
    <location>
        <begin position="99"/>
        <end position="123"/>
    </location>
</feature>
<feature type="transmembrane region" description="Helical" evidence="1">
    <location>
        <begin position="124"/>
        <end position="144"/>
    </location>
</feature>
<feature type="topological domain" description="Extracellular" evidence="8">
    <location>
        <begin position="145"/>
        <end position="219"/>
    </location>
</feature>
<feature type="transmembrane region" description="Helical" evidence="1">
    <location>
        <begin position="220"/>
        <end position="240"/>
    </location>
</feature>
<feature type="topological domain" description="Cytoplasmic" evidence="8">
    <location>
        <begin position="241"/>
        <end position="274"/>
    </location>
</feature>
<feature type="transmembrane region" description="Helical" evidence="1">
    <location>
        <begin position="275"/>
        <end position="295"/>
    </location>
</feature>
<feature type="transmembrane region" description="Helical" evidence="1">
    <location>
        <begin position="296"/>
        <end position="316"/>
    </location>
</feature>
<feature type="topological domain" description="Extracellular" evidence="8">
    <location>
        <position position="317"/>
    </location>
</feature>
<feature type="transmembrane region" description="Helical" evidence="1">
    <location>
        <begin position="318"/>
        <end position="338"/>
    </location>
</feature>
<feature type="topological domain" description="Cytoplasmic" evidence="8">
    <location>
        <begin position="339"/>
        <end position="353"/>
    </location>
</feature>
<feature type="transmembrane region" description="Helical" evidence="1">
    <location>
        <begin position="354"/>
        <end position="374"/>
    </location>
</feature>
<feature type="topological domain" description="Extracellular" evidence="8">
    <location>
        <begin position="375"/>
        <end position="378"/>
    </location>
</feature>
<feature type="transmembrane region" description="Helical" evidence="1">
    <location>
        <begin position="379"/>
        <end position="399"/>
    </location>
</feature>
<feature type="topological domain" description="Cytoplasmic" evidence="8">
    <location>
        <begin position="400"/>
        <end position="458"/>
    </location>
</feature>
<feature type="site" description="Cleavage; by ced-3" evidence="5">
    <location>
        <begin position="21"/>
        <end position="22"/>
    </location>
</feature>
<feature type="mutagenesis site" description="Causes constitutive phosphatidylserine cell surface exposure." evidence="5">
    <location>
        <begin position="1"/>
        <end position="22"/>
    </location>
</feature>
<feature type="mutagenesis site" description="Loss of ced-3-mediated cleavage." evidence="5">
    <original>D</original>
    <variation>A</variation>
    <location>
        <position position="21"/>
    </location>
</feature>
<feature type="mutagenesis site" description="Loss of ced-3-mediated cleavage. Reduced phosphatidylserine cell surface exposure in apoptotic cells. Reduced number of cell corpses at the comma stage followed by an increase at the 4-fold stage." evidence="5">
    <original>D</original>
    <variation>E</variation>
    <location>
        <position position="21"/>
    </location>
</feature>
<feature type="mutagenesis site" description="No defect in apoptosis during embryogenesis." evidence="5">
    <original>D</original>
    <variation>A</variation>
    <location>
        <position position="163"/>
    </location>
</feature>
<protein>
    <recommendedName>
        <fullName evidence="8">Cell death abnormality protein 8</fullName>
    </recommendedName>
</protein>